<evidence type="ECO:0000255" key="1">
    <source>
        <dbReference type="HAMAP-Rule" id="MF_00298"/>
    </source>
</evidence>
<protein>
    <recommendedName>
        <fullName evidence="1">RNA pyrophosphohydrolase</fullName>
        <ecNumber evidence="1">3.6.1.-</ecNumber>
    </recommendedName>
    <alternativeName>
        <fullName evidence="1">(Di)nucleoside polyphosphate hydrolase</fullName>
    </alternativeName>
</protein>
<dbReference type="EC" id="3.6.1.-" evidence="1"/>
<dbReference type="EMBL" id="AE017220">
    <property type="protein sequence ID" value="AAX66849.1"/>
    <property type="molecule type" value="Genomic_DNA"/>
</dbReference>
<dbReference type="RefSeq" id="WP_000564481.1">
    <property type="nucleotide sequence ID" value="NC_006905.1"/>
</dbReference>
<dbReference type="SMR" id="Q57KB3"/>
<dbReference type="KEGG" id="sec:SCH_2943"/>
<dbReference type="HOGENOM" id="CLU_087195_3_2_6"/>
<dbReference type="Proteomes" id="UP000000538">
    <property type="component" value="Chromosome"/>
</dbReference>
<dbReference type="GO" id="GO:0005737">
    <property type="term" value="C:cytoplasm"/>
    <property type="evidence" value="ECO:0007669"/>
    <property type="project" value="TreeGrafter"/>
</dbReference>
<dbReference type="GO" id="GO:0034353">
    <property type="term" value="F:mRNA 5'-diphosphatase activity"/>
    <property type="evidence" value="ECO:0007669"/>
    <property type="project" value="TreeGrafter"/>
</dbReference>
<dbReference type="GO" id="GO:0006402">
    <property type="term" value="P:mRNA catabolic process"/>
    <property type="evidence" value="ECO:0007669"/>
    <property type="project" value="TreeGrafter"/>
</dbReference>
<dbReference type="CDD" id="cd03671">
    <property type="entry name" value="NUDIX_Ap4A_hydrolase_plant_like"/>
    <property type="match status" value="1"/>
</dbReference>
<dbReference type="FunFam" id="3.90.79.10:FF:000001">
    <property type="entry name" value="RNA pyrophosphohydrolase"/>
    <property type="match status" value="1"/>
</dbReference>
<dbReference type="Gene3D" id="3.90.79.10">
    <property type="entry name" value="Nucleoside Triphosphate Pyrophosphohydrolase"/>
    <property type="match status" value="1"/>
</dbReference>
<dbReference type="HAMAP" id="MF_00298">
    <property type="entry name" value="Nudix_RppH"/>
    <property type="match status" value="1"/>
</dbReference>
<dbReference type="InterPro" id="IPR020476">
    <property type="entry name" value="Nudix_hydrolase"/>
</dbReference>
<dbReference type="InterPro" id="IPR015797">
    <property type="entry name" value="NUDIX_hydrolase-like_dom_sf"/>
</dbReference>
<dbReference type="InterPro" id="IPR020084">
    <property type="entry name" value="NUDIX_hydrolase_CS"/>
</dbReference>
<dbReference type="InterPro" id="IPR000086">
    <property type="entry name" value="NUDIX_hydrolase_dom"/>
</dbReference>
<dbReference type="InterPro" id="IPR022927">
    <property type="entry name" value="RppH"/>
</dbReference>
<dbReference type="NCBIfam" id="NF001934">
    <property type="entry name" value="PRK00714.1-1"/>
    <property type="match status" value="1"/>
</dbReference>
<dbReference type="NCBIfam" id="NF001937">
    <property type="entry name" value="PRK00714.1-4"/>
    <property type="match status" value="1"/>
</dbReference>
<dbReference type="NCBIfam" id="NF001938">
    <property type="entry name" value="PRK00714.1-5"/>
    <property type="match status" value="1"/>
</dbReference>
<dbReference type="PANTHER" id="PTHR23114">
    <property type="entry name" value="M7GPPPN-MRNA HYDROLASE"/>
    <property type="match status" value="1"/>
</dbReference>
<dbReference type="PANTHER" id="PTHR23114:SF17">
    <property type="entry name" value="M7GPPPN-MRNA HYDROLASE"/>
    <property type="match status" value="1"/>
</dbReference>
<dbReference type="Pfam" id="PF00293">
    <property type="entry name" value="NUDIX"/>
    <property type="match status" value="1"/>
</dbReference>
<dbReference type="PRINTS" id="PR00502">
    <property type="entry name" value="NUDIXFAMILY"/>
</dbReference>
<dbReference type="SUPFAM" id="SSF55811">
    <property type="entry name" value="Nudix"/>
    <property type="match status" value="1"/>
</dbReference>
<dbReference type="PROSITE" id="PS51462">
    <property type="entry name" value="NUDIX"/>
    <property type="match status" value="1"/>
</dbReference>
<dbReference type="PROSITE" id="PS00893">
    <property type="entry name" value="NUDIX_BOX"/>
    <property type="match status" value="1"/>
</dbReference>
<keyword id="KW-0378">Hydrolase</keyword>
<reference key="1">
    <citation type="journal article" date="2005" name="Nucleic Acids Res.">
        <title>The genome sequence of Salmonella enterica serovar Choleraesuis, a highly invasive and resistant zoonotic pathogen.</title>
        <authorList>
            <person name="Chiu C.-H."/>
            <person name="Tang P."/>
            <person name="Chu C."/>
            <person name="Hu S."/>
            <person name="Bao Q."/>
            <person name="Yu J."/>
            <person name="Chou Y.-Y."/>
            <person name="Wang H.-S."/>
            <person name="Lee Y.-S."/>
        </authorList>
    </citation>
    <scope>NUCLEOTIDE SEQUENCE [LARGE SCALE GENOMIC DNA]</scope>
    <source>
        <strain>SC-B67</strain>
    </source>
</reference>
<accession>Q57KB3</accession>
<name>RPPH_SALCH</name>
<feature type="chain" id="PRO_0000231934" description="RNA pyrophosphohydrolase">
    <location>
        <begin position="1"/>
        <end position="176"/>
    </location>
</feature>
<feature type="domain" description="Nudix hydrolase" evidence="1">
    <location>
        <begin position="6"/>
        <end position="149"/>
    </location>
</feature>
<feature type="short sequence motif" description="Nudix box">
    <location>
        <begin position="38"/>
        <end position="59"/>
    </location>
</feature>
<organism>
    <name type="scientific">Salmonella choleraesuis (strain SC-B67)</name>
    <dbReference type="NCBI Taxonomy" id="321314"/>
    <lineage>
        <taxon>Bacteria</taxon>
        <taxon>Pseudomonadati</taxon>
        <taxon>Pseudomonadota</taxon>
        <taxon>Gammaproteobacteria</taxon>
        <taxon>Enterobacterales</taxon>
        <taxon>Enterobacteriaceae</taxon>
        <taxon>Salmonella</taxon>
    </lineage>
</organism>
<sequence length="176" mass="20806">MIDDDGYRPNVGIVICNRQGQVMWARRFGQHSWQFPQGGINPGESAEQAMYRELFEEVGLSRKDVRILASTRNWLRYKLPKRLVRWDTKPVCIGQKQKWFLLQLMSADAEINMQTSSTPEFDGWRWVSYWYPVRQVVSFKRDVYRRVMKEFASVVMALQDNPPKLQSAPAYRRKRG</sequence>
<proteinExistence type="inferred from homology"/>
<comment type="function">
    <text evidence="1">Accelerates the degradation of transcripts by removing pyrophosphate from the 5'-end of triphosphorylated RNA, leading to a more labile monophosphorylated state that can stimulate subsequent ribonuclease cleavage.</text>
</comment>
<comment type="cofactor">
    <cofactor evidence="1">
        <name>a divalent metal cation</name>
        <dbReference type="ChEBI" id="CHEBI:60240"/>
    </cofactor>
</comment>
<comment type="similarity">
    <text evidence="1">Belongs to the Nudix hydrolase family. RppH subfamily.</text>
</comment>
<gene>
    <name evidence="1" type="primary">rppH</name>
    <name evidence="1" type="synonym">nudH</name>
    <name type="ordered locus">SCH_2943</name>
</gene>